<keyword id="KW-0067">ATP-binding</keyword>
<keyword id="KW-0315">Glutamine amidotransferase</keyword>
<keyword id="KW-0332">GMP biosynthesis</keyword>
<keyword id="KW-0436">Ligase</keyword>
<keyword id="KW-0547">Nucleotide-binding</keyword>
<keyword id="KW-0658">Purine biosynthesis</keyword>
<accession>Q9Z6H4</accession>
<accession>A2RJZ5</accession>
<reference key="1">
    <citation type="journal article" date="1999" name="Mol. Microbiol.">
        <title>Effects of metabolic flux on stress response pathways in Lactococcus lactis.</title>
        <authorList>
            <person name="Duwat P."/>
            <person name="Ehrlich S.D."/>
            <person name="Gruss A."/>
        </authorList>
    </citation>
    <scope>NUCLEOTIDE SEQUENCE [GENOMIC DNA]</scope>
</reference>
<reference key="2">
    <citation type="journal article" date="2007" name="J. Bacteriol.">
        <title>The complete genome sequence of the lactic acid bacterial paradigm Lactococcus lactis subsp. cremoris MG1363.</title>
        <authorList>
            <person name="Wegmann U."/>
            <person name="O'Connell-Motherway M."/>
            <person name="Zomer A."/>
            <person name="Buist G."/>
            <person name="Shearman C."/>
            <person name="Canchaya C."/>
            <person name="Ventura M."/>
            <person name="Goesmann A."/>
            <person name="Gasson M.J."/>
            <person name="Kuipers O.P."/>
            <person name="van Sinderen D."/>
            <person name="Kok J."/>
        </authorList>
    </citation>
    <scope>NUCLEOTIDE SEQUENCE [LARGE SCALE GENOMIC DNA]</scope>
    <source>
        <strain>MG1363</strain>
    </source>
</reference>
<dbReference type="EC" id="6.3.5.2"/>
<dbReference type="EMBL" id="AF058326">
    <property type="protein sequence ID" value="AAD15805.1"/>
    <property type="molecule type" value="Genomic_DNA"/>
</dbReference>
<dbReference type="EMBL" id="AM406671">
    <property type="protein sequence ID" value="CAL97602.1"/>
    <property type="molecule type" value="Genomic_DNA"/>
</dbReference>
<dbReference type="RefSeq" id="WP_011834939.1">
    <property type="nucleotide sequence ID" value="NC_009004.1"/>
</dbReference>
<dbReference type="SMR" id="Q9Z6H4"/>
<dbReference type="STRING" id="416870.llmg_1008"/>
<dbReference type="MEROPS" id="C26.957"/>
<dbReference type="GeneID" id="61109720"/>
<dbReference type="KEGG" id="llm:llmg_1008"/>
<dbReference type="eggNOG" id="COG0518">
    <property type="taxonomic scope" value="Bacteria"/>
</dbReference>
<dbReference type="eggNOG" id="COG0519">
    <property type="taxonomic scope" value="Bacteria"/>
</dbReference>
<dbReference type="HOGENOM" id="CLU_014340_0_5_9"/>
<dbReference type="OrthoDB" id="9802219at2"/>
<dbReference type="PhylomeDB" id="Q9Z6H4"/>
<dbReference type="UniPathway" id="UPA00189">
    <property type="reaction ID" value="UER00296"/>
</dbReference>
<dbReference type="Proteomes" id="UP000000364">
    <property type="component" value="Chromosome"/>
</dbReference>
<dbReference type="GO" id="GO:0005829">
    <property type="term" value="C:cytosol"/>
    <property type="evidence" value="ECO:0007669"/>
    <property type="project" value="TreeGrafter"/>
</dbReference>
<dbReference type="GO" id="GO:0005524">
    <property type="term" value="F:ATP binding"/>
    <property type="evidence" value="ECO:0007669"/>
    <property type="project" value="UniProtKB-UniRule"/>
</dbReference>
<dbReference type="GO" id="GO:0003921">
    <property type="term" value="F:GMP synthase activity"/>
    <property type="evidence" value="ECO:0007669"/>
    <property type="project" value="InterPro"/>
</dbReference>
<dbReference type="CDD" id="cd01742">
    <property type="entry name" value="GATase1_GMP_Synthase"/>
    <property type="match status" value="1"/>
</dbReference>
<dbReference type="CDD" id="cd01997">
    <property type="entry name" value="GMP_synthase_C"/>
    <property type="match status" value="1"/>
</dbReference>
<dbReference type="FunFam" id="3.30.300.10:FF:000002">
    <property type="entry name" value="GMP synthase [glutamine-hydrolyzing]"/>
    <property type="match status" value="1"/>
</dbReference>
<dbReference type="FunFam" id="3.40.50.620:FF:000001">
    <property type="entry name" value="GMP synthase [glutamine-hydrolyzing]"/>
    <property type="match status" value="1"/>
</dbReference>
<dbReference type="FunFam" id="3.40.50.880:FF:000001">
    <property type="entry name" value="GMP synthase [glutamine-hydrolyzing]"/>
    <property type="match status" value="1"/>
</dbReference>
<dbReference type="Gene3D" id="3.30.300.10">
    <property type="match status" value="1"/>
</dbReference>
<dbReference type="Gene3D" id="3.40.50.880">
    <property type="match status" value="1"/>
</dbReference>
<dbReference type="Gene3D" id="3.40.50.620">
    <property type="entry name" value="HUPs"/>
    <property type="match status" value="1"/>
</dbReference>
<dbReference type="HAMAP" id="MF_00344">
    <property type="entry name" value="GMP_synthase"/>
    <property type="match status" value="1"/>
</dbReference>
<dbReference type="InterPro" id="IPR029062">
    <property type="entry name" value="Class_I_gatase-like"/>
</dbReference>
<dbReference type="InterPro" id="IPR017926">
    <property type="entry name" value="GATASE"/>
</dbReference>
<dbReference type="InterPro" id="IPR001674">
    <property type="entry name" value="GMP_synth_C"/>
</dbReference>
<dbReference type="InterPro" id="IPR004739">
    <property type="entry name" value="GMP_synth_GATase"/>
</dbReference>
<dbReference type="InterPro" id="IPR022955">
    <property type="entry name" value="GMP_synthase"/>
</dbReference>
<dbReference type="InterPro" id="IPR025777">
    <property type="entry name" value="GMPS_ATP_PPase_dom"/>
</dbReference>
<dbReference type="InterPro" id="IPR022310">
    <property type="entry name" value="NAD/GMP_synthase"/>
</dbReference>
<dbReference type="InterPro" id="IPR014729">
    <property type="entry name" value="Rossmann-like_a/b/a_fold"/>
</dbReference>
<dbReference type="NCBIfam" id="TIGR00884">
    <property type="entry name" value="guaA_Cterm"/>
    <property type="match status" value="1"/>
</dbReference>
<dbReference type="NCBIfam" id="TIGR00888">
    <property type="entry name" value="guaA_Nterm"/>
    <property type="match status" value="1"/>
</dbReference>
<dbReference type="NCBIfam" id="NF000848">
    <property type="entry name" value="PRK00074.1"/>
    <property type="match status" value="1"/>
</dbReference>
<dbReference type="PANTHER" id="PTHR11922:SF2">
    <property type="entry name" value="GMP SYNTHASE [GLUTAMINE-HYDROLYZING]"/>
    <property type="match status" value="1"/>
</dbReference>
<dbReference type="PANTHER" id="PTHR11922">
    <property type="entry name" value="GMP SYNTHASE-RELATED"/>
    <property type="match status" value="1"/>
</dbReference>
<dbReference type="Pfam" id="PF00117">
    <property type="entry name" value="GATase"/>
    <property type="match status" value="1"/>
</dbReference>
<dbReference type="Pfam" id="PF00958">
    <property type="entry name" value="GMP_synt_C"/>
    <property type="match status" value="1"/>
</dbReference>
<dbReference type="Pfam" id="PF02540">
    <property type="entry name" value="NAD_synthase"/>
    <property type="match status" value="1"/>
</dbReference>
<dbReference type="PRINTS" id="PR00097">
    <property type="entry name" value="ANTSNTHASEII"/>
</dbReference>
<dbReference type="PRINTS" id="PR00099">
    <property type="entry name" value="CPSGATASE"/>
</dbReference>
<dbReference type="PRINTS" id="PR00096">
    <property type="entry name" value="GATASE"/>
</dbReference>
<dbReference type="SUPFAM" id="SSF52402">
    <property type="entry name" value="Adenine nucleotide alpha hydrolases-like"/>
    <property type="match status" value="1"/>
</dbReference>
<dbReference type="SUPFAM" id="SSF52317">
    <property type="entry name" value="Class I glutamine amidotransferase-like"/>
    <property type="match status" value="1"/>
</dbReference>
<dbReference type="SUPFAM" id="SSF54810">
    <property type="entry name" value="GMP synthetase C-terminal dimerisation domain"/>
    <property type="match status" value="1"/>
</dbReference>
<dbReference type="PROSITE" id="PS51273">
    <property type="entry name" value="GATASE_TYPE_1"/>
    <property type="match status" value="1"/>
</dbReference>
<dbReference type="PROSITE" id="PS51553">
    <property type="entry name" value="GMPS_ATP_PPASE"/>
    <property type="match status" value="1"/>
</dbReference>
<evidence type="ECO:0000250" key="1"/>
<evidence type="ECO:0000305" key="2"/>
<proteinExistence type="inferred from homology"/>
<organism>
    <name type="scientific">Lactococcus lactis subsp. cremoris (strain MG1363)</name>
    <dbReference type="NCBI Taxonomy" id="416870"/>
    <lineage>
        <taxon>Bacteria</taxon>
        <taxon>Bacillati</taxon>
        <taxon>Bacillota</taxon>
        <taxon>Bacilli</taxon>
        <taxon>Lactobacillales</taxon>
        <taxon>Streptococcaceae</taxon>
        <taxon>Lactococcus</taxon>
        <taxon>Lactococcus cremoris subsp. cremoris</taxon>
    </lineage>
</organism>
<gene>
    <name type="primary">guaA</name>
    <name type="ordered locus">llmg_1008</name>
</gene>
<protein>
    <recommendedName>
        <fullName>GMP synthase [glutamine-hydrolyzing]</fullName>
        <ecNumber>6.3.5.2</ecNumber>
    </recommendedName>
    <alternativeName>
        <fullName>GMP synthetase</fullName>
    </alternativeName>
    <alternativeName>
        <fullName>Glutamine amidotransferase</fullName>
    </alternativeName>
</protein>
<name>GUAA_LACLM</name>
<sequence>MSDTTLEKIIVLDYGSQYNQLIARRIREIGVFSELMSHKVTAKEIREINPIGIILSGGPNSVYDEGSFDIDPEIFELGLPVLGICYGMQLMSYKLGGMVEAAGEREYGVAPLQLTEKSALFAGTPEVQDVLMSHGDRVTAIPEGFHVVGTSPNSPFAAVENTERNLYGIQFHPEVRHSVHGTEMLRNFALNICGAKGNWSMENFIDMQIKDIREKVGDKKVLLGLSGGVDSSVVGVLLQRAIGDQLTSIFVDHGFLRKGEADQVMETLGGKFGLNIIKVDAQKRFMDKLVGLSDPETKRKIIGNEFVYVFDDEANKLEGVDFLAQGTLYTDVIESGTDTAQTIKSHHNVGGLPEDMQFQLIEPLNTLFKDEVRALGTQLGMPDEIVWRQPFPGPGLAIRVLGDLTEEKLETVRESDAILREEIAASGLERDVWQYFTVNTDVKSVGVMGDQRTYDYTLAIRAITSIDGMTADFAQLPWDLLQKISKRIVNEVDHVNRIVYDITSKPPATVEWQ</sequence>
<feature type="chain" id="PRO_0000140137" description="GMP synthase [glutamine-hydrolyzing]">
    <location>
        <begin position="1"/>
        <end position="513"/>
    </location>
</feature>
<feature type="domain" description="Glutamine amidotransferase type-1">
    <location>
        <begin position="8"/>
        <end position="198"/>
    </location>
</feature>
<feature type="domain" description="GMPS ATP-PPase">
    <location>
        <begin position="199"/>
        <end position="388"/>
    </location>
</feature>
<feature type="active site" description="Nucleophile" evidence="1">
    <location>
        <position position="85"/>
    </location>
</feature>
<feature type="active site" evidence="1">
    <location>
        <position position="172"/>
    </location>
</feature>
<feature type="active site" evidence="1">
    <location>
        <position position="174"/>
    </location>
</feature>
<feature type="binding site" evidence="1">
    <location>
        <begin position="226"/>
        <end position="232"/>
    </location>
    <ligand>
        <name>ATP</name>
        <dbReference type="ChEBI" id="CHEBI:30616"/>
    </ligand>
</feature>
<feature type="sequence conflict" description="In Ref. 1; AAD15805." evidence="2" ref="1">
    <original>K</original>
    <variation>Q</variation>
    <location>
        <position position="298"/>
    </location>
</feature>
<comment type="function">
    <text evidence="1">Catalyzes the synthesis of GMP from XMP.</text>
</comment>
<comment type="catalytic activity">
    <reaction>
        <text>XMP + L-glutamine + ATP + H2O = GMP + L-glutamate + AMP + diphosphate + 2 H(+)</text>
        <dbReference type="Rhea" id="RHEA:11680"/>
        <dbReference type="ChEBI" id="CHEBI:15377"/>
        <dbReference type="ChEBI" id="CHEBI:15378"/>
        <dbReference type="ChEBI" id="CHEBI:29985"/>
        <dbReference type="ChEBI" id="CHEBI:30616"/>
        <dbReference type="ChEBI" id="CHEBI:33019"/>
        <dbReference type="ChEBI" id="CHEBI:57464"/>
        <dbReference type="ChEBI" id="CHEBI:58115"/>
        <dbReference type="ChEBI" id="CHEBI:58359"/>
        <dbReference type="ChEBI" id="CHEBI:456215"/>
        <dbReference type="EC" id="6.3.5.2"/>
    </reaction>
</comment>
<comment type="pathway">
    <text>Purine metabolism; GMP biosynthesis; GMP from XMP (L-Gln route): step 1/1.</text>
</comment>
<comment type="subunit">
    <text evidence="1">Homodimer.</text>
</comment>